<feature type="signal peptide" evidence="4">
    <location>
        <begin position="1"/>
        <end position="23"/>
    </location>
</feature>
<feature type="chain" id="PRO_0000073023" description="Serine protease inhibitor Kazal-type 1">
    <location>
        <begin position="24"/>
        <end position="79"/>
    </location>
</feature>
<feature type="domain" description="Kazal-like" evidence="2">
    <location>
        <begin position="26"/>
        <end position="79"/>
    </location>
</feature>
<feature type="site" description="Reactive bond for trypsin" evidence="1 2">
    <location>
        <begin position="41"/>
        <end position="42"/>
    </location>
</feature>
<feature type="site" description="Necessary for sperm binding" evidence="1">
    <location>
        <begin position="43"/>
        <end position="44"/>
    </location>
</feature>
<feature type="disulfide bond" evidence="2 3">
    <location>
        <begin position="32"/>
        <end position="61"/>
    </location>
</feature>
<feature type="disulfide bond" evidence="2 3">
    <location>
        <begin position="39"/>
        <end position="58"/>
    </location>
</feature>
<feature type="disulfide bond" evidence="2 3">
    <location>
        <begin position="47"/>
        <end position="79"/>
    </location>
</feature>
<gene>
    <name type="primary">SPINK1</name>
    <name type="synonym">PSTI</name>
</gene>
<evidence type="ECO:0000250" key="1">
    <source>
        <dbReference type="UniProtKB" id="P09036"/>
    </source>
</evidence>
<evidence type="ECO:0000255" key="2">
    <source>
        <dbReference type="PROSITE-ProRule" id="PRU00798"/>
    </source>
</evidence>
<evidence type="ECO:0000269" key="3">
    <source>
    </source>
</evidence>
<evidence type="ECO:0000269" key="4">
    <source>
    </source>
</evidence>
<evidence type="ECO:0000303" key="5">
    <source>
    </source>
</evidence>
<accession>P00996</accession>
<accession>Q56K02</accession>
<name>ISK1_BOVIN</name>
<protein>
    <recommendedName>
        <fullName evidence="1">Serine protease inhibitor Kazal-type 1</fullName>
    </recommendedName>
    <alternativeName>
        <fullName evidence="5">Pancreatic secretory trypsin inhibitor</fullName>
    </alternativeName>
</protein>
<comment type="function">
    <text evidence="1">Serine protease inhibitor which exhibits anti-trypsin activity. In the pancreas, protects against trypsin-catalyzed premature activation of zymogens.</text>
</comment>
<comment type="function">
    <text evidence="1">In the male reproductive tract, binds to sperm heads where it modulates sperm capacitance by inhibiting calcium uptake and nitrogen oxide (NO) production.</text>
</comment>
<comment type="subcellular location">
    <subcellularLocation>
        <location evidence="1">Secreted</location>
    </subcellularLocation>
</comment>
<reference key="1">
    <citation type="submission" date="2005-01" db="EMBL/GenBank/DDBJ databases">
        <title>Analysis of sequences obtained from constructed full-length bovine cDNA libraries.</title>
        <authorList>
            <person name="Yu J."/>
            <person name="Meng Y."/>
            <person name="Wang Z."/>
            <person name="Hansen C."/>
            <person name="Li C."/>
            <person name="Moore S.S."/>
        </authorList>
    </citation>
    <scope>NUCLEOTIDE SEQUENCE [LARGE SCALE MRNA]</scope>
    <source>
        <tissue>Lymphoid epithelium</tissue>
    </source>
</reference>
<reference key="2">
    <citation type="submission" date="2005-08" db="EMBL/GenBank/DDBJ databases">
        <authorList>
            <consortium name="NIH - Mammalian Gene Collection (MGC) project"/>
        </authorList>
    </citation>
    <scope>NUCLEOTIDE SEQUENCE [LARGE SCALE MRNA]</scope>
    <source>
        <strain>Crossbred X Angus</strain>
        <tissue>Ileum</tissue>
    </source>
</reference>
<reference key="3">
    <citation type="journal article" date="1969" name="J. Biol. Chem.">
        <title>The structure of the bovine pancreatic scretory trypsin inhibitor -- Kazal's inhibitor. II. The order of the tryptic peptides.</title>
        <authorList>
            <person name="Greene L.J."/>
            <person name="Bartelt D.C."/>
        </authorList>
    </citation>
    <scope>PROTEIN SEQUENCE OF 24-79</scope>
</reference>
<reference key="4">
    <citation type="journal article" date="1971" name="J. Biol. Chem.">
        <title>The structure of the bovine pancreatic secretory trypsin inhibitor -- Kazal's inhibitor. 3. Determination of the disulfide bonds and proteolysis by thermolysin.</title>
        <authorList>
            <person name="Guy O."/>
            <person name="Shapanka R."/>
            <person name="Greene L.J."/>
        </authorList>
    </citation>
    <scope>DISULFIDE BONDS</scope>
</reference>
<proteinExistence type="evidence at protein level"/>
<sequence length="79" mass="8467">MKVASIFLLTALVLMSLSGNSGANILGREAKCTNEVNGCPRIYNPVCGTDGVTYSNECLLCMENKERQTPVLIQKSGPC</sequence>
<dbReference type="EMBL" id="AY911325">
    <property type="protein sequence ID" value="AAW82093.1"/>
    <property type="molecule type" value="mRNA"/>
</dbReference>
<dbReference type="EMBL" id="BC102485">
    <property type="protein sequence ID" value="AAI02486.1"/>
    <property type="molecule type" value="mRNA"/>
</dbReference>
<dbReference type="PIR" id="A01230">
    <property type="entry name" value="TIBOA"/>
</dbReference>
<dbReference type="RefSeq" id="NP_001020519.1">
    <property type="nucleotide sequence ID" value="NM_001025348.1"/>
</dbReference>
<dbReference type="SMR" id="P00996"/>
<dbReference type="FunCoup" id="P00996">
    <property type="interactions" value="24"/>
</dbReference>
<dbReference type="STRING" id="9913.ENSBTAP00000020673"/>
<dbReference type="MEROPS" id="I01.011"/>
<dbReference type="PaxDb" id="9913-ENSBTAP00000020673"/>
<dbReference type="Ensembl" id="ENSBTAT00000020673.6">
    <property type="protein sequence ID" value="ENSBTAP00000020673.4"/>
    <property type="gene ID" value="ENSBTAG00000015558.6"/>
</dbReference>
<dbReference type="GeneID" id="574092"/>
<dbReference type="KEGG" id="bta:574092"/>
<dbReference type="CTD" id="6690"/>
<dbReference type="VEuPathDB" id="HostDB:ENSBTAG00000015558"/>
<dbReference type="VGNC" id="VGNC:35219">
    <property type="gene designation" value="SPINK1"/>
</dbReference>
<dbReference type="eggNOG" id="KOG3649">
    <property type="taxonomic scope" value="Eukaryota"/>
</dbReference>
<dbReference type="GeneTree" id="ENSGT00530000064228"/>
<dbReference type="HOGENOM" id="CLU_169765_2_1_1"/>
<dbReference type="InParanoid" id="P00996"/>
<dbReference type="OMA" id="REAKCNN"/>
<dbReference type="OrthoDB" id="126772at2759"/>
<dbReference type="Proteomes" id="UP000009136">
    <property type="component" value="Chromosome 7"/>
</dbReference>
<dbReference type="GO" id="GO:0005615">
    <property type="term" value="C:extracellular space"/>
    <property type="evidence" value="ECO:0007669"/>
    <property type="project" value="Ensembl"/>
</dbReference>
<dbReference type="GO" id="GO:0004867">
    <property type="term" value="F:serine-type endopeptidase inhibitor activity"/>
    <property type="evidence" value="ECO:0007669"/>
    <property type="project" value="UniProtKB-KW"/>
</dbReference>
<dbReference type="GO" id="GO:0090281">
    <property type="term" value="P:negative regulation of calcium ion import"/>
    <property type="evidence" value="ECO:0007669"/>
    <property type="project" value="Ensembl"/>
</dbReference>
<dbReference type="GO" id="GO:0010751">
    <property type="term" value="P:negative regulation of nitric oxide mediated signal transduction"/>
    <property type="evidence" value="ECO:0007669"/>
    <property type="project" value="Ensembl"/>
</dbReference>
<dbReference type="GO" id="GO:0007263">
    <property type="term" value="P:nitric oxide mediated signal transduction"/>
    <property type="evidence" value="ECO:0007669"/>
    <property type="project" value="Ensembl"/>
</dbReference>
<dbReference type="GO" id="GO:0060046">
    <property type="term" value="P:regulation of acrosome reaction"/>
    <property type="evidence" value="ECO:0007669"/>
    <property type="project" value="Ensembl"/>
</dbReference>
<dbReference type="GO" id="GO:2001256">
    <property type="term" value="P:regulation of store-operated calcium entry"/>
    <property type="evidence" value="ECO:0007669"/>
    <property type="project" value="Ensembl"/>
</dbReference>
<dbReference type="GO" id="GO:0048240">
    <property type="term" value="P:sperm capacitation"/>
    <property type="evidence" value="ECO:0007669"/>
    <property type="project" value="Ensembl"/>
</dbReference>
<dbReference type="CDD" id="cd01327">
    <property type="entry name" value="KAZAL_PSTI"/>
    <property type="match status" value="1"/>
</dbReference>
<dbReference type="FunFam" id="3.30.60.30:FF:000031">
    <property type="entry name" value="Serine protease inhibitor Kazal-type 2"/>
    <property type="match status" value="1"/>
</dbReference>
<dbReference type="Gene3D" id="3.30.60.30">
    <property type="match status" value="1"/>
</dbReference>
<dbReference type="InterPro" id="IPR002350">
    <property type="entry name" value="Kazal_dom"/>
</dbReference>
<dbReference type="InterPro" id="IPR036058">
    <property type="entry name" value="Kazal_dom_sf"/>
</dbReference>
<dbReference type="InterPro" id="IPR001239">
    <property type="entry name" value="Prot_inh_Kazal-m"/>
</dbReference>
<dbReference type="PANTHER" id="PTHR21312">
    <property type="entry name" value="SERINE PROTEASE INHIBITOR"/>
    <property type="match status" value="1"/>
</dbReference>
<dbReference type="PANTHER" id="PTHR21312:SF27">
    <property type="entry name" value="SERINE PROTEASE INHIBITOR KAZAL-TYPE 1"/>
    <property type="match status" value="1"/>
</dbReference>
<dbReference type="Pfam" id="PF00050">
    <property type="entry name" value="Kazal_1"/>
    <property type="match status" value="1"/>
</dbReference>
<dbReference type="PRINTS" id="PR00290">
    <property type="entry name" value="KAZALINHBTR"/>
</dbReference>
<dbReference type="SMART" id="SM00280">
    <property type="entry name" value="KAZAL"/>
    <property type="match status" value="1"/>
</dbReference>
<dbReference type="SUPFAM" id="SSF100895">
    <property type="entry name" value="Kazal-type serine protease inhibitors"/>
    <property type="match status" value="1"/>
</dbReference>
<dbReference type="PROSITE" id="PS00282">
    <property type="entry name" value="KAZAL_1"/>
    <property type="match status" value="1"/>
</dbReference>
<dbReference type="PROSITE" id="PS51465">
    <property type="entry name" value="KAZAL_2"/>
    <property type="match status" value="1"/>
</dbReference>
<organism>
    <name type="scientific">Bos taurus</name>
    <name type="common">Bovine</name>
    <dbReference type="NCBI Taxonomy" id="9913"/>
    <lineage>
        <taxon>Eukaryota</taxon>
        <taxon>Metazoa</taxon>
        <taxon>Chordata</taxon>
        <taxon>Craniata</taxon>
        <taxon>Vertebrata</taxon>
        <taxon>Euteleostomi</taxon>
        <taxon>Mammalia</taxon>
        <taxon>Eutheria</taxon>
        <taxon>Laurasiatheria</taxon>
        <taxon>Artiodactyla</taxon>
        <taxon>Ruminantia</taxon>
        <taxon>Pecora</taxon>
        <taxon>Bovidae</taxon>
        <taxon>Bovinae</taxon>
        <taxon>Bos</taxon>
    </lineage>
</organism>
<keyword id="KW-0903">Direct protein sequencing</keyword>
<keyword id="KW-1015">Disulfide bond</keyword>
<keyword id="KW-0646">Protease inhibitor</keyword>
<keyword id="KW-1185">Reference proteome</keyword>
<keyword id="KW-0964">Secreted</keyword>
<keyword id="KW-0722">Serine protease inhibitor</keyword>
<keyword id="KW-0732">Signal</keyword>